<reference key="1">
    <citation type="journal article" date="2010" name="Genome Biol.">
        <title>Structure and dynamics of the pan-genome of Streptococcus pneumoniae and closely related species.</title>
        <authorList>
            <person name="Donati C."/>
            <person name="Hiller N.L."/>
            <person name="Tettelin H."/>
            <person name="Muzzi A."/>
            <person name="Croucher N.J."/>
            <person name="Angiuoli S.V."/>
            <person name="Oggioni M."/>
            <person name="Dunning Hotopp J.C."/>
            <person name="Hu F.Z."/>
            <person name="Riley D.R."/>
            <person name="Covacci A."/>
            <person name="Mitchell T.J."/>
            <person name="Bentley S.D."/>
            <person name="Kilian M."/>
            <person name="Ehrlich G.D."/>
            <person name="Rappuoli R."/>
            <person name="Moxon E.R."/>
            <person name="Masignani V."/>
        </authorList>
    </citation>
    <scope>NUCLEOTIDE SEQUENCE [LARGE SCALE GENOMIC DNA]</scope>
    <source>
        <strain>JJA</strain>
    </source>
</reference>
<gene>
    <name evidence="1" type="primary">rpmI</name>
    <name type="ordered locus">SPJ_0901</name>
</gene>
<protein>
    <recommendedName>
        <fullName evidence="1">Large ribosomal subunit protein bL35</fullName>
    </recommendedName>
    <alternativeName>
        <fullName evidence="3">50S ribosomal protein L35</fullName>
    </alternativeName>
</protein>
<comment type="similarity">
    <text evidence="1">Belongs to the bacterial ribosomal protein bL35 family.</text>
</comment>
<sequence length="66" mass="7836">MPKQKTHRASAKRFKRTGSGGLKRFRAYTSHRFHGKTKKQRRHLRKASMVHSGDYKRIKAMLTRLK</sequence>
<feature type="chain" id="PRO_1000146163" description="Large ribosomal subunit protein bL35">
    <location>
        <begin position="1"/>
        <end position="66"/>
    </location>
</feature>
<feature type="region of interest" description="Disordered" evidence="2">
    <location>
        <begin position="1"/>
        <end position="21"/>
    </location>
</feature>
<feature type="compositionally biased region" description="Basic residues" evidence="2">
    <location>
        <begin position="1"/>
        <end position="16"/>
    </location>
</feature>
<dbReference type="EMBL" id="CP000919">
    <property type="protein sequence ID" value="ACO20076.1"/>
    <property type="molecule type" value="Genomic_DNA"/>
</dbReference>
<dbReference type="RefSeq" id="WP_001125943.1">
    <property type="nucleotide sequence ID" value="NC_012466.1"/>
</dbReference>
<dbReference type="SMR" id="C1CDV5"/>
<dbReference type="GeneID" id="93739777"/>
<dbReference type="KEGG" id="sjj:SPJ_0901"/>
<dbReference type="HOGENOM" id="CLU_169643_3_0_9"/>
<dbReference type="Proteomes" id="UP000002206">
    <property type="component" value="Chromosome"/>
</dbReference>
<dbReference type="GO" id="GO:0022625">
    <property type="term" value="C:cytosolic large ribosomal subunit"/>
    <property type="evidence" value="ECO:0007669"/>
    <property type="project" value="TreeGrafter"/>
</dbReference>
<dbReference type="GO" id="GO:0003735">
    <property type="term" value="F:structural constituent of ribosome"/>
    <property type="evidence" value="ECO:0007669"/>
    <property type="project" value="InterPro"/>
</dbReference>
<dbReference type="GO" id="GO:0006412">
    <property type="term" value="P:translation"/>
    <property type="evidence" value="ECO:0007669"/>
    <property type="project" value="UniProtKB-UniRule"/>
</dbReference>
<dbReference type="FunFam" id="4.10.410.60:FF:000001">
    <property type="entry name" value="50S ribosomal protein L35"/>
    <property type="match status" value="1"/>
</dbReference>
<dbReference type="Gene3D" id="4.10.410.60">
    <property type="match status" value="1"/>
</dbReference>
<dbReference type="HAMAP" id="MF_00514">
    <property type="entry name" value="Ribosomal_bL35"/>
    <property type="match status" value="1"/>
</dbReference>
<dbReference type="InterPro" id="IPR001706">
    <property type="entry name" value="Ribosomal_bL35"/>
</dbReference>
<dbReference type="InterPro" id="IPR021137">
    <property type="entry name" value="Ribosomal_bL35-like"/>
</dbReference>
<dbReference type="InterPro" id="IPR018265">
    <property type="entry name" value="Ribosomal_bL35_CS"/>
</dbReference>
<dbReference type="InterPro" id="IPR037229">
    <property type="entry name" value="Ribosomal_bL35_sf"/>
</dbReference>
<dbReference type="NCBIfam" id="TIGR00001">
    <property type="entry name" value="rpmI_bact"/>
    <property type="match status" value="1"/>
</dbReference>
<dbReference type="PANTHER" id="PTHR33343">
    <property type="entry name" value="54S RIBOSOMAL PROTEIN BL35M"/>
    <property type="match status" value="1"/>
</dbReference>
<dbReference type="PANTHER" id="PTHR33343:SF1">
    <property type="entry name" value="LARGE RIBOSOMAL SUBUNIT PROTEIN BL35M"/>
    <property type="match status" value="1"/>
</dbReference>
<dbReference type="Pfam" id="PF01632">
    <property type="entry name" value="Ribosomal_L35p"/>
    <property type="match status" value="1"/>
</dbReference>
<dbReference type="PRINTS" id="PR00064">
    <property type="entry name" value="RIBOSOMALL35"/>
</dbReference>
<dbReference type="SUPFAM" id="SSF143034">
    <property type="entry name" value="L35p-like"/>
    <property type="match status" value="1"/>
</dbReference>
<dbReference type="PROSITE" id="PS00936">
    <property type="entry name" value="RIBOSOMAL_L35"/>
    <property type="match status" value="1"/>
</dbReference>
<evidence type="ECO:0000255" key="1">
    <source>
        <dbReference type="HAMAP-Rule" id="MF_00514"/>
    </source>
</evidence>
<evidence type="ECO:0000256" key="2">
    <source>
        <dbReference type="SAM" id="MobiDB-lite"/>
    </source>
</evidence>
<evidence type="ECO:0000305" key="3"/>
<accession>C1CDV5</accession>
<name>RL35_STRZJ</name>
<keyword id="KW-0687">Ribonucleoprotein</keyword>
<keyword id="KW-0689">Ribosomal protein</keyword>
<organism>
    <name type="scientific">Streptococcus pneumoniae (strain JJA)</name>
    <dbReference type="NCBI Taxonomy" id="488222"/>
    <lineage>
        <taxon>Bacteria</taxon>
        <taxon>Bacillati</taxon>
        <taxon>Bacillota</taxon>
        <taxon>Bacilli</taxon>
        <taxon>Lactobacillales</taxon>
        <taxon>Streptococcaceae</taxon>
        <taxon>Streptococcus</taxon>
    </lineage>
</organism>
<proteinExistence type="inferred from homology"/>